<gene>
    <name type="primary">BBR</name>
    <name type="ordered locus">At3g19910</name>
    <name type="ORF">MPN9.15</name>
</gene>
<protein>
    <recommendedName>
        <fullName>E3 ubiquitin ligase BIG BROTHER-related</fullName>
        <shortName>AtBBR</shortName>
        <ecNumber evidence="1">2.3.2.27</ecNumber>
    </recommendedName>
    <alternativeName>
        <fullName evidence="4">RING-type E3 ubiquitin transferase BIG BROTHER-related</fullName>
    </alternativeName>
</protein>
<comment type="function">
    <text evidence="1">E3 ubiquitin-ligase probably involved in organ size regulation.</text>
</comment>
<comment type="catalytic activity">
    <reaction evidence="1">
        <text>S-ubiquitinyl-[E2 ubiquitin-conjugating enzyme]-L-cysteine + [acceptor protein]-L-lysine = [E2 ubiquitin-conjugating enzyme]-L-cysteine + N(6)-ubiquitinyl-[acceptor protein]-L-lysine.</text>
        <dbReference type="EC" id="2.3.2.27"/>
    </reaction>
</comment>
<comment type="pathway">
    <text>Protein modification; protein ubiquitination.</text>
</comment>
<comment type="PTM">
    <text evidence="1">Auto-ubiquitinated.</text>
</comment>
<name>BBR_ARATH</name>
<keyword id="KW-0479">Metal-binding</keyword>
<keyword id="KW-1185">Reference proteome</keyword>
<keyword id="KW-0808">Transferase</keyword>
<keyword id="KW-0832">Ubl conjugation</keyword>
<keyword id="KW-0833">Ubl conjugation pathway</keyword>
<keyword id="KW-0862">Zinc</keyword>
<keyword id="KW-0863">Zinc-finger</keyword>
<accession>Q9LT17</accession>
<accession>Q8LG55</accession>
<sequence>MPMENDNGPHVGNVVVTAEQATKINETDGRLPENRQTGVVSDTGSGSERGEQGVGESAVAVAVPVEESGSISVGELPAPRSSSARVPFTNLSQIDADLALARTLQEQERAYMMLTMNSEISDYGSWETGSYVYDEDEFDDPENEDEDDDEDEYETDDDPQEDGLDVNVHANEDDQEDDGNSDIEEVAYTDDEAYARALQEAEERDMAARLSALSGLANRVVEDLEDESHTSQDAWDEMDPDELSYEELLALGDIVGTESRGLSADTIASLPSKRYKEGDNQNGTNESCVICRLDYEDDEDLILLPCKHSYHSECINNWLKINKVCPVCSAEVSTSTSGQS</sequence>
<organism>
    <name type="scientific">Arabidopsis thaliana</name>
    <name type="common">Mouse-ear cress</name>
    <dbReference type="NCBI Taxonomy" id="3702"/>
    <lineage>
        <taxon>Eukaryota</taxon>
        <taxon>Viridiplantae</taxon>
        <taxon>Streptophyta</taxon>
        <taxon>Embryophyta</taxon>
        <taxon>Tracheophyta</taxon>
        <taxon>Spermatophyta</taxon>
        <taxon>Magnoliopsida</taxon>
        <taxon>eudicotyledons</taxon>
        <taxon>Gunneridae</taxon>
        <taxon>Pentapetalae</taxon>
        <taxon>rosids</taxon>
        <taxon>malvids</taxon>
        <taxon>Brassicales</taxon>
        <taxon>Brassicaceae</taxon>
        <taxon>Camelineae</taxon>
        <taxon>Arabidopsis</taxon>
    </lineage>
</organism>
<evidence type="ECO:0000250" key="1">
    <source>
        <dbReference type="UniProtKB" id="Q8L649"/>
    </source>
</evidence>
<evidence type="ECO:0000255" key="2">
    <source>
        <dbReference type="PROSITE-ProRule" id="PRU00175"/>
    </source>
</evidence>
<evidence type="ECO:0000256" key="3">
    <source>
        <dbReference type="SAM" id="MobiDB-lite"/>
    </source>
</evidence>
<evidence type="ECO:0000305" key="4"/>
<feature type="chain" id="PRO_0000396944" description="E3 ubiquitin ligase BIG BROTHER-related">
    <location>
        <begin position="1"/>
        <end position="340"/>
    </location>
</feature>
<feature type="zinc finger region" description="RING-type; atypical" evidence="2">
    <location>
        <begin position="288"/>
        <end position="329"/>
    </location>
</feature>
<feature type="region of interest" description="Disordered" evidence="3">
    <location>
        <begin position="1"/>
        <end position="56"/>
    </location>
</feature>
<feature type="region of interest" description="Disordered" evidence="3">
    <location>
        <begin position="133"/>
        <end position="182"/>
    </location>
</feature>
<feature type="compositionally biased region" description="Polar residues" evidence="3">
    <location>
        <begin position="34"/>
        <end position="46"/>
    </location>
</feature>
<feature type="compositionally biased region" description="Acidic residues" evidence="3">
    <location>
        <begin position="133"/>
        <end position="164"/>
    </location>
</feature>
<feature type="compositionally biased region" description="Acidic residues" evidence="3">
    <location>
        <begin position="173"/>
        <end position="182"/>
    </location>
</feature>
<feature type="sequence conflict" description="In Ref. 4; AAM61025." evidence="4" ref="4">
    <original>W</original>
    <variation>R</variation>
    <location>
        <position position="235"/>
    </location>
</feature>
<reference key="1">
    <citation type="journal article" date="2000" name="DNA Res.">
        <title>Structural analysis of Arabidopsis thaliana chromosome 3. I. Sequence features of the regions of 4,504,864 bp covered by sixty P1 and TAC clones.</title>
        <authorList>
            <person name="Sato S."/>
            <person name="Nakamura Y."/>
            <person name="Kaneko T."/>
            <person name="Katoh T."/>
            <person name="Asamizu E."/>
            <person name="Tabata S."/>
        </authorList>
    </citation>
    <scope>NUCLEOTIDE SEQUENCE [LARGE SCALE GENOMIC DNA]</scope>
    <source>
        <strain>cv. Columbia</strain>
    </source>
</reference>
<reference key="2">
    <citation type="journal article" date="2017" name="Plant J.">
        <title>Araport11: a complete reannotation of the Arabidopsis thaliana reference genome.</title>
        <authorList>
            <person name="Cheng C.Y."/>
            <person name="Krishnakumar V."/>
            <person name="Chan A.P."/>
            <person name="Thibaud-Nissen F."/>
            <person name="Schobel S."/>
            <person name="Town C.D."/>
        </authorList>
    </citation>
    <scope>GENOME REANNOTATION</scope>
    <source>
        <strain>cv. Columbia</strain>
    </source>
</reference>
<reference key="3">
    <citation type="journal article" date="2003" name="Science">
        <title>Empirical analysis of transcriptional activity in the Arabidopsis genome.</title>
        <authorList>
            <person name="Yamada K."/>
            <person name="Lim J."/>
            <person name="Dale J.M."/>
            <person name="Chen H."/>
            <person name="Shinn P."/>
            <person name="Palm C.J."/>
            <person name="Southwick A.M."/>
            <person name="Wu H.C."/>
            <person name="Kim C.J."/>
            <person name="Nguyen M."/>
            <person name="Pham P.K."/>
            <person name="Cheuk R.F."/>
            <person name="Karlin-Newmann G."/>
            <person name="Liu S.X."/>
            <person name="Lam B."/>
            <person name="Sakano H."/>
            <person name="Wu T."/>
            <person name="Yu G."/>
            <person name="Miranda M."/>
            <person name="Quach H.L."/>
            <person name="Tripp M."/>
            <person name="Chang C.H."/>
            <person name="Lee J.M."/>
            <person name="Toriumi M.J."/>
            <person name="Chan M.M."/>
            <person name="Tang C.C."/>
            <person name="Onodera C.S."/>
            <person name="Deng J.M."/>
            <person name="Akiyama K."/>
            <person name="Ansari Y."/>
            <person name="Arakawa T."/>
            <person name="Banh J."/>
            <person name="Banno F."/>
            <person name="Bowser L."/>
            <person name="Brooks S.Y."/>
            <person name="Carninci P."/>
            <person name="Chao Q."/>
            <person name="Choy N."/>
            <person name="Enju A."/>
            <person name="Goldsmith A.D."/>
            <person name="Gurjal M."/>
            <person name="Hansen N.F."/>
            <person name="Hayashizaki Y."/>
            <person name="Johnson-Hopson C."/>
            <person name="Hsuan V.W."/>
            <person name="Iida K."/>
            <person name="Karnes M."/>
            <person name="Khan S."/>
            <person name="Koesema E."/>
            <person name="Ishida J."/>
            <person name="Jiang P.X."/>
            <person name="Jones T."/>
            <person name="Kawai J."/>
            <person name="Kamiya A."/>
            <person name="Meyers C."/>
            <person name="Nakajima M."/>
            <person name="Narusaka M."/>
            <person name="Seki M."/>
            <person name="Sakurai T."/>
            <person name="Satou M."/>
            <person name="Tamse R."/>
            <person name="Vaysberg M."/>
            <person name="Wallender E.K."/>
            <person name="Wong C."/>
            <person name="Yamamura Y."/>
            <person name="Yuan S."/>
            <person name="Shinozaki K."/>
            <person name="Davis R.W."/>
            <person name="Theologis A."/>
            <person name="Ecker J.R."/>
        </authorList>
    </citation>
    <scope>NUCLEOTIDE SEQUENCE [LARGE SCALE MRNA]</scope>
    <source>
        <strain>cv. Columbia</strain>
    </source>
</reference>
<reference key="4">
    <citation type="submission" date="2002-03" db="EMBL/GenBank/DDBJ databases">
        <title>Full-length cDNA from Arabidopsis thaliana.</title>
        <authorList>
            <person name="Brover V.V."/>
            <person name="Troukhan M.E."/>
            <person name="Alexandrov N.A."/>
            <person name="Lu Y.-P."/>
            <person name="Flavell R.B."/>
            <person name="Feldmann K.A."/>
        </authorList>
    </citation>
    <scope>NUCLEOTIDE SEQUENCE [LARGE SCALE MRNA]</scope>
</reference>
<proteinExistence type="evidence at transcript level"/>
<dbReference type="EC" id="2.3.2.27" evidence="1"/>
<dbReference type="EMBL" id="AB025631">
    <property type="protein sequence ID" value="BAB01306.1"/>
    <property type="molecule type" value="Genomic_DNA"/>
</dbReference>
<dbReference type="EMBL" id="CP002686">
    <property type="protein sequence ID" value="AEE76307.1"/>
    <property type="molecule type" value="Genomic_DNA"/>
</dbReference>
<dbReference type="EMBL" id="AY045590">
    <property type="protein sequence ID" value="AAK73948.1"/>
    <property type="molecule type" value="mRNA"/>
</dbReference>
<dbReference type="EMBL" id="AY045984">
    <property type="protein sequence ID" value="AAK76658.1"/>
    <property type="molecule type" value="mRNA"/>
</dbReference>
<dbReference type="EMBL" id="AY079353">
    <property type="protein sequence ID" value="AAL85084.1"/>
    <property type="molecule type" value="mRNA"/>
</dbReference>
<dbReference type="EMBL" id="AY084453">
    <property type="protein sequence ID" value="AAM61025.1"/>
    <property type="molecule type" value="mRNA"/>
</dbReference>
<dbReference type="RefSeq" id="NP_566651.1">
    <property type="nucleotide sequence ID" value="NM_112881.5"/>
</dbReference>
<dbReference type="SMR" id="Q9LT17"/>
<dbReference type="FunCoup" id="Q9LT17">
    <property type="interactions" value="577"/>
</dbReference>
<dbReference type="STRING" id="3702.Q9LT17"/>
<dbReference type="iPTMnet" id="Q9LT17"/>
<dbReference type="PaxDb" id="3702-AT3G19910.1"/>
<dbReference type="ProteomicsDB" id="241129"/>
<dbReference type="EnsemblPlants" id="AT3G19910.1">
    <property type="protein sequence ID" value="AT3G19910.1"/>
    <property type="gene ID" value="AT3G19910"/>
</dbReference>
<dbReference type="GeneID" id="821529"/>
<dbReference type="Gramene" id="AT3G19910.1">
    <property type="protein sequence ID" value="AT3G19910.1"/>
    <property type="gene ID" value="AT3G19910"/>
</dbReference>
<dbReference type="KEGG" id="ath:AT3G19910"/>
<dbReference type="Araport" id="AT3G19910"/>
<dbReference type="TAIR" id="AT3G19910">
    <property type="gene designation" value="CTL18"/>
</dbReference>
<dbReference type="eggNOG" id="KOG0800">
    <property type="taxonomic scope" value="Eukaryota"/>
</dbReference>
<dbReference type="HOGENOM" id="CLU_059266_1_0_1"/>
<dbReference type="InParanoid" id="Q9LT17"/>
<dbReference type="OMA" id="NGEEHMA"/>
<dbReference type="PhylomeDB" id="Q9LT17"/>
<dbReference type="UniPathway" id="UPA00143"/>
<dbReference type="PRO" id="PR:Q9LT17"/>
<dbReference type="Proteomes" id="UP000006548">
    <property type="component" value="Chromosome 3"/>
</dbReference>
<dbReference type="ExpressionAtlas" id="Q9LT17">
    <property type="expression patterns" value="baseline and differential"/>
</dbReference>
<dbReference type="GO" id="GO:0004842">
    <property type="term" value="F:ubiquitin-protein transferase activity"/>
    <property type="evidence" value="ECO:0000250"/>
    <property type="project" value="UniProtKB"/>
</dbReference>
<dbReference type="GO" id="GO:0008270">
    <property type="term" value="F:zinc ion binding"/>
    <property type="evidence" value="ECO:0007669"/>
    <property type="project" value="UniProtKB-KW"/>
</dbReference>
<dbReference type="GO" id="GO:0051865">
    <property type="term" value="P:protein autoubiquitination"/>
    <property type="evidence" value="ECO:0000250"/>
    <property type="project" value="UniProtKB"/>
</dbReference>
<dbReference type="GO" id="GO:0016567">
    <property type="term" value="P:protein ubiquitination"/>
    <property type="evidence" value="ECO:0000250"/>
    <property type="project" value="UniProtKB"/>
</dbReference>
<dbReference type="CDD" id="cd23115">
    <property type="entry name" value="RING-H2_BB-like"/>
    <property type="match status" value="1"/>
</dbReference>
<dbReference type="FunFam" id="3.30.40.10:FF:000417">
    <property type="entry name" value="E3 ubiquitin ligase BIG BROTHER-related"/>
    <property type="match status" value="1"/>
</dbReference>
<dbReference type="Gene3D" id="3.30.40.10">
    <property type="entry name" value="Zinc/RING finger domain, C3HC4 (zinc finger)"/>
    <property type="match status" value="1"/>
</dbReference>
<dbReference type="InterPro" id="IPR043312">
    <property type="entry name" value="AtBBR-like"/>
</dbReference>
<dbReference type="InterPro" id="IPR048217">
    <property type="entry name" value="BB-like_RING-H2"/>
</dbReference>
<dbReference type="InterPro" id="IPR001841">
    <property type="entry name" value="Znf_RING"/>
</dbReference>
<dbReference type="InterPro" id="IPR013083">
    <property type="entry name" value="Znf_RING/FYVE/PHD"/>
</dbReference>
<dbReference type="PANTHER" id="PTHR47530">
    <property type="entry name" value="E3 UBIQUITIN LIGASE BIG BROTHER-RELATED"/>
    <property type="match status" value="1"/>
</dbReference>
<dbReference type="PANTHER" id="PTHR47530:SF4">
    <property type="entry name" value="E3 UBIQUITIN LIGASE BIG BROTHER-RELATED"/>
    <property type="match status" value="1"/>
</dbReference>
<dbReference type="Pfam" id="PF13639">
    <property type="entry name" value="zf-RING_2"/>
    <property type="match status" value="1"/>
</dbReference>
<dbReference type="SMART" id="SM00184">
    <property type="entry name" value="RING"/>
    <property type="match status" value="1"/>
</dbReference>
<dbReference type="SUPFAM" id="SSF57850">
    <property type="entry name" value="RING/U-box"/>
    <property type="match status" value="1"/>
</dbReference>
<dbReference type="PROSITE" id="PS50089">
    <property type="entry name" value="ZF_RING_2"/>
    <property type="match status" value="1"/>
</dbReference>